<name>LCDHT_RUEPO</name>
<accession>Q5LTH8</accession>
<keyword id="KW-0963">Cytoplasm</keyword>
<keyword id="KW-0378">Hydrolase</keyword>
<keyword id="KW-0511">Multifunctional enzyme</keyword>
<keyword id="KW-0520">NAD</keyword>
<keyword id="KW-0560">Oxidoreductase</keyword>
<keyword id="KW-1185">Reference proteome</keyword>
<proteinExistence type="inferred from homology"/>
<sequence>MTTAAIIGGGVIGGGWAARFLLNGWDVRVFDPDPEAERKIGEVLANARRSLPGLSDMPLPPEGKLSFHADLGEAVTGAAWIQESVPERLDLKLKVYRSIQEACDPGAILGSSTSGFKPSELQEGALRPGQIVVTHPFNPVYLLPLIELVTTPENSPEMIERAKEIMRGLGQFPLHVRKEIDAHIADRFLEAVWREALWLVKDGIATTEEIDEAIRMGFGIRWAQMGLFETYRVAGGEAGMKHFMAQFGPCLSWPWTKLMDVPEFTDELVDLIAGQSDAQSGHHTIRELERIRDNNLVGMMRALKAQNWGAGAVLNKHDAALKPKALPDLDTADLTQPILTLSRAVPLDWTDYNGHMTESKYLEAFANSTDRFMEIIGCDADYIAAGGSYFTAETHIRHLDEAHAGARIRVETQMLLGQGKKLHLFHRMYEGDKLLATGESFLLHVSLETRKPCAPSPEIEAAMARIAEAQAGLSYPEGAGSAIRKPA</sequence>
<reference key="1">
    <citation type="journal article" date="2004" name="Nature">
        <title>Genome sequence of Silicibacter pomeroyi reveals adaptations to the marine environment.</title>
        <authorList>
            <person name="Moran M.A."/>
            <person name="Buchan A."/>
            <person name="Gonzalez J.M."/>
            <person name="Heidelberg J.F."/>
            <person name="Whitman W.B."/>
            <person name="Kiene R.P."/>
            <person name="Henriksen J.R."/>
            <person name="King G.M."/>
            <person name="Belas R."/>
            <person name="Fuqua C."/>
            <person name="Brinkac L.M."/>
            <person name="Lewis M."/>
            <person name="Johri S."/>
            <person name="Weaver B."/>
            <person name="Pai G."/>
            <person name="Eisen J.A."/>
            <person name="Rahe E."/>
            <person name="Sheldon W.M."/>
            <person name="Ye W."/>
            <person name="Miller T.R."/>
            <person name="Carlton J."/>
            <person name="Rasko D.A."/>
            <person name="Paulsen I.T."/>
            <person name="Ren Q."/>
            <person name="Daugherty S.C."/>
            <person name="DeBoy R.T."/>
            <person name="Dodson R.J."/>
            <person name="Durkin A.S."/>
            <person name="Madupu R."/>
            <person name="Nelson W.C."/>
            <person name="Sullivan S.A."/>
            <person name="Rosovitz M.J."/>
            <person name="Haft D.H."/>
            <person name="Selengut J."/>
            <person name="Ward N."/>
        </authorList>
    </citation>
    <scope>NUCLEOTIDE SEQUENCE [LARGE SCALE GENOMIC DNA]</scope>
    <source>
        <strain>ATCC 700808 / DSM 15171 / DSS-3</strain>
    </source>
</reference>
<reference key="2">
    <citation type="journal article" date="2014" name="Stand. Genomic Sci.">
        <title>An updated genome annotation for the model marine bacterium Ruegeria pomeroyi DSS-3.</title>
        <authorList>
            <person name="Rivers A.R."/>
            <person name="Smith C.B."/>
            <person name="Moran M.A."/>
        </authorList>
    </citation>
    <scope>GENOME REANNOTATION</scope>
    <source>
        <strain>ATCC 700808 / DSM 15171 / DSS-3</strain>
    </source>
</reference>
<comment type="function">
    <text evidence="2">Multifunctional enzyme that catalyzes the NAD(+)-dependent oxidation of L-carnitine to 3-dehydrocarnitine and the cleavage of betainyl-CoA (N,N,N-trimethylglycyl-CoA) into glycine betaine and coenzyme A.</text>
</comment>
<comment type="catalytic activity">
    <reaction evidence="2">
        <text>carnitine + NAD(+) = 3-dehydrocarnitine + NADH + H(+)</text>
        <dbReference type="Rhea" id="RHEA:19265"/>
        <dbReference type="ChEBI" id="CHEBI:15378"/>
        <dbReference type="ChEBI" id="CHEBI:17126"/>
        <dbReference type="ChEBI" id="CHEBI:57540"/>
        <dbReference type="ChEBI" id="CHEBI:57885"/>
        <dbReference type="ChEBI" id="CHEBI:57945"/>
        <dbReference type="EC" id="1.1.1.108"/>
    </reaction>
</comment>
<comment type="catalytic activity">
    <reaction evidence="2">
        <text>N,N,N-trimethylglycyl-CoA + H2O = glycine betaine + CoA + H(+)</text>
        <dbReference type="Rhea" id="RHEA:45716"/>
        <dbReference type="ChEBI" id="CHEBI:15377"/>
        <dbReference type="ChEBI" id="CHEBI:15378"/>
        <dbReference type="ChEBI" id="CHEBI:17750"/>
        <dbReference type="ChEBI" id="CHEBI:57287"/>
        <dbReference type="ChEBI" id="CHEBI:85405"/>
        <dbReference type="EC" id="3.1.2.33"/>
    </reaction>
</comment>
<comment type="pathway">
    <text evidence="2">Amine and polyamine metabolism; carnitine metabolism.</text>
</comment>
<comment type="subunit">
    <text evidence="2">Homodimer.</text>
</comment>
<comment type="subcellular location">
    <subcellularLocation>
        <location evidence="1">Cytoplasm</location>
    </subcellularLocation>
</comment>
<comment type="similarity">
    <text evidence="4">In the N-terminal section; belongs to the 3-hydroxyacyl-CoA dehydrogenase family. L-carnitine dehydrogenase subfamily.</text>
</comment>
<comment type="similarity">
    <text evidence="4">In the C-terminal section; belongs to the betainyl-CoA thioesterase family.</text>
</comment>
<protein>
    <recommendedName>
        <fullName evidence="2">L-carnitine dehydrogenase/betainyl-CoA thioesterase</fullName>
    </recommendedName>
    <alternativeName>
        <fullName evidence="2">CDH thioesterase</fullName>
    </alternativeName>
    <domain>
        <recommendedName>
            <fullName evidence="2">L-carnitine dehydrogenase</fullName>
            <shortName evidence="2">CDH</shortName>
            <shortName evidence="2">L-CDH</shortName>
            <ecNumber evidence="2">1.1.1.108</ecNumber>
        </recommendedName>
    </domain>
    <domain>
        <recommendedName>
            <fullName evidence="2">Betainyl-CoA thioesterase</fullName>
            <ecNumber evidence="2">3.1.2.33</ecNumber>
        </recommendedName>
        <alternativeName>
            <fullName evidence="2">Betainyl-CoA thiolase</fullName>
        </alternativeName>
    </domain>
</protein>
<evidence type="ECO:0000250" key="1">
    <source>
        <dbReference type="UniProtKB" id="D7UNT2"/>
    </source>
</evidence>
<evidence type="ECO:0000250" key="2">
    <source>
        <dbReference type="UniProtKB" id="Q92NF5"/>
    </source>
</evidence>
<evidence type="ECO:0000255" key="3"/>
<evidence type="ECO:0000305" key="4"/>
<evidence type="ECO:0000312" key="5">
    <source>
        <dbReference type="EMBL" id="AAV94723.1"/>
    </source>
</evidence>
<feature type="chain" id="PRO_0000417907" description="L-carnitine dehydrogenase/betainyl-CoA thioesterase">
    <location>
        <begin position="1"/>
        <end position="487"/>
    </location>
</feature>
<feature type="region of interest" description="L-carnitine dehydrogenase" evidence="2">
    <location>
        <begin position="1"/>
        <end position="327"/>
    </location>
</feature>
<feature type="region of interest" description="Betainyl-CoA thioesterase" evidence="2">
    <location>
        <begin position="328"/>
        <end position="487"/>
    </location>
</feature>
<feature type="binding site" evidence="3">
    <location>
        <begin position="8"/>
        <end position="13"/>
    </location>
    <ligand>
        <name>NAD(+)</name>
        <dbReference type="ChEBI" id="CHEBI:57540"/>
    </ligand>
</feature>
<organism>
    <name type="scientific">Ruegeria pomeroyi (strain ATCC 700808 / DSM 15171 / DSS-3)</name>
    <name type="common">Silicibacter pomeroyi</name>
    <dbReference type="NCBI Taxonomy" id="246200"/>
    <lineage>
        <taxon>Bacteria</taxon>
        <taxon>Pseudomonadati</taxon>
        <taxon>Pseudomonadota</taxon>
        <taxon>Alphaproteobacteria</taxon>
        <taxon>Rhodobacterales</taxon>
        <taxon>Roseobacteraceae</taxon>
        <taxon>Ruegeria</taxon>
    </lineage>
</organism>
<gene>
    <name evidence="5" type="ordered locus">SPO1436</name>
</gene>
<dbReference type="EC" id="1.1.1.108" evidence="2"/>
<dbReference type="EC" id="3.1.2.33" evidence="2"/>
<dbReference type="EMBL" id="CP000031">
    <property type="protein sequence ID" value="AAV94723.1"/>
    <property type="molecule type" value="Genomic_DNA"/>
</dbReference>
<dbReference type="RefSeq" id="WP_011047173.1">
    <property type="nucleotide sequence ID" value="NC_003911.12"/>
</dbReference>
<dbReference type="SMR" id="Q5LTH8"/>
<dbReference type="STRING" id="246200.SPO1436"/>
<dbReference type="PaxDb" id="246200-SPO1436"/>
<dbReference type="KEGG" id="sil:SPO1436"/>
<dbReference type="eggNOG" id="COG0824">
    <property type="taxonomic scope" value="Bacteria"/>
</dbReference>
<dbReference type="eggNOG" id="COG1250">
    <property type="taxonomic scope" value="Bacteria"/>
</dbReference>
<dbReference type="HOGENOM" id="CLU_578448_0_0_5"/>
<dbReference type="OrthoDB" id="9803287at2"/>
<dbReference type="UniPathway" id="UPA00117"/>
<dbReference type="Proteomes" id="UP000001023">
    <property type="component" value="Chromosome"/>
</dbReference>
<dbReference type="GO" id="GO:0005737">
    <property type="term" value="C:cytoplasm"/>
    <property type="evidence" value="ECO:0007669"/>
    <property type="project" value="UniProtKB-SubCell"/>
</dbReference>
<dbReference type="GO" id="GO:0047728">
    <property type="term" value="F:carnitine 3-dehydrogenase activity"/>
    <property type="evidence" value="ECO:0007669"/>
    <property type="project" value="UniProtKB-UniRule"/>
</dbReference>
<dbReference type="GO" id="GO:0016787">
    <property type="term" value="F:hydrolase activity"/>
    <property type="evidence" value="ECO:0007669"/>
    <property type="project" value="UniProtKB-KW"/>
</dbReference>
<dbReference type="GO" id="GO:0070403">
    <property type="term" value="F:NAD+ binding"/>
    <property type="evidence" value="ECO:0007669"/>
    <property type="project" value="InterPro"/>
</dbReference>
<dbReference type="GO" id="GO:0009437">
    <property type="term" value="P:carnitine metabolic process"/>
    <property type="evidence" value="ECO:0007669"/>
    <property type="project" value="UniProtKB-UniRule"/>
</dbReference>
<dbReference type="GO" id="GO:0009056">
    <property type="term" value="P:catabolic process"/>
    <property type="evidence" value="ECO:0007669"/>
    <property type="project" value="UniProtKB-ARBA"/>
</dbReference>
<dbReference type="GO" id="GO:0006631">
    <property type="term" value="P:fatty acid metabolic process"/>
    <property type="evidence" value="ECO:0007669"/>
    <property type="project" value="InterPro"/>
</dbReference>
<dbReference type="CDD" id="cd00586">
    <property type="entry name" value="4HBT"/>
    <property type="match status" value="1"/>
</dbReference>
<dbReference type="Gene3D" id="3.10.129.10">
    <property type="entry name" value="Hotdog Thioesterase"/>
    <property type="match status" value="1"/>
</dbReference>
<dbReference type="Gene3D" id="1.10.1040.10">
    <property type="entry name" value="N-(1-d-carboxylethyl)-l-norvaline Dehydrogenase, domain 2"/>
    <property type="match status" value="1"/>
</dbReference>
<dbReference type="Gene3D" id="3.40.50.720">
    <property type="entry name" value="NAD(P)-binding Rossmann-like Domain"/>
    <property type="match status" value="1"/>
</dbReference>
<dbReference type="HAMAP" id="MF_02129">
    <property type="entry name" value="L_carnitine_dehydrog"/>
    <property type="match status" value="1"/>
</dbReference>
<dbReference type="InterPro" id="IPR006176">
    <property type="entry name" value="3-OHacyl-CoA_DH_NAD-bd"/>
</dbReference>
<dbReference type="InterPro" id="IPR006108">
    <property type="entry name" value="3HC_DH_C"/>
</dbReference>
<dbReference type="InterPro" id="IPR008927">
    <property type="entry name" value="6-PGluconate_DH-like_C_sf"/>
</dbReference>
<dbReference type="InterPro" id="IPR013328">
    <property type="entry name" value="6PGD_dom2"/>
</dbReference>
<dbReference type="InterPro" id="IPR029069">
    <property type="entry name" value="HotDog_dom_sf"/>
</dbReference>
<dbReference type="InterPro" id="IPR026578">
    <property type="entry name" value="L-carnitine_dehydrogenase"/>
</dbReference>
<dbReference type="InterPro" id="IPR036291">
    <property type="entry name" value="NAD(P)-bd_dom_sf"/>
</dbReference>
<dbReference type="NCBIfam" id="NF005716">
    <property type="entry name" value="PRK07531.1"/>
    <property type="match status" value="1"/>
</dbReference>
<dbReference type="PANTHER" id="PTHR48075">
    <property type="entry name" value="3-HYDROXYACYL-COA DEHYDROGENASE FAMILY PROTEIN"/>
    <property type="match status" value="1"/>
</dbReference>
<dbReference type="PANTHER" id="PTHR48075:SF5">
    <property type="entry name" value="3-HYDROXYBUTYRYL-COA DEHYDROGENASE"/>
    <property type="match status" value="1"/>
</dbReference>
<dbReference type="Pfam" id="PF00725">
    <property type="entry name" value="3HCDH"/>
    <property type="match status" value="1"/>
</dbReference>
<dbReference type="Pfam" id="PF02737">
    <property type="entry name" value="3HCDH_N"/>
    <property type="match status" value="1"/>
</dbReference>
<dbReference type="Pfam" id="PF13279">
    <property type="entry name" value="4HBT_2"/>
    <property type="match status" value="1"/>
</dbReference>
<dbReference type="SUPFAM" id="SSF48179">
    <property type="entry name" value="6-phosphogluconate dehydrogenase C-terminal domain-like"/>
    <property type="match status" value="1"/>
</dbReference>
<dbReference type="SUPFAM" id="SSF51735">
    <property type="entry name" value="NAD(P)-binding Rossmann-fold domains"/>
    <property type="match status" value="1"/>
</dbReference>
<dbReference type="SUPFAM" id="SSF54637">
    <property type="entry name" value="Thioesterase/thiol ester dehydrase-isomerase"/>
    <property type="match status" value="1"/>
</dbReference>